<keyword id="KW-0002">3D-structure</keyword>
<keyword id="KW-0963">Cytoplasm</keyword>
<keyword id="KW-0445">Lipid transport</keyword>
<keyword id="KW-0446">Lipid-binding</keyword>
<keyword id="KW-0539">Nucleus</keyword>
<keyword id="KW-0964">Secreted</keyword>
<keyword id="KW-0770">Synapse</keyword>
<keyword id="KW-0813">Transport</keyword>
<dbReference type="EMBL" id="KR054394">
    <property type="protein sequence ID" value="AKE37139.1"/>
    <property type="molecule type" value="mRNA"/>
</dbReference>
<dbReference type="PDB" id="5BVT">
    <property type="method" value="X-ray"/>
    <property type="resolution" value="2.31 A"/>
    <property type="chains" value="A=1-134"/>
</dbReference>
<dbReference type="PDBsum" id="5BVT"/>
<dbReference type="SMR" id="A0A0K0MJ13"/>
<dbReference type="EvolutionaryTrace" id="A0A0K0MJ13"/>
<dbReference type="GO" id="GO:0005737">
    <property type="term" value="C:cytoplasm"/>
    <property type="evidence" value="ECO:0000250"/>
    <property type="project" value="UniProtKB"/>
</dbReference>
<dbReference type="GO" id="GO:0005576">
    <property type="term" value="C:extracellular region"/>
    <property type="evidence" value="ECO:0007669"/>
    <property type="project" value="UniProtKB-SubCell"/>
</dbReference>
<dbReference type="GO" id="GO:0005634">
    <property type="term" value="C:nucleus"/>
    <property type="evidence" value="ECO:0000250"/>
    <property type="project" value="UniProtKB"/>
</dbReference>
<dbReference type="GO" id="GO:0014069">
    <property type="term" value="C:postsynaptic density"/>
    <property type="evidence" value="ECO:0007669"/>
    <property type="project" value="UniProtKB-SubCell"/>
</dbReference>
<dbReference type="GO" id="GO:0008289">
    <property type="term" value="F:lipid binding"/>
    <property type="evidence" value="ECO:0007669"/>
    <property type="project" value="UniProtKB-KW"/>
</dbReference>
<dbReference type="GO" id="GO:0006869">
    <property type="term" value="P:lipid transport"/>
    <property type="evidence" value="ECO:0007669"/>
    <property type="project" value="UniProtKB-KW"/>
</dbReference>
<dbReference type="FunFam" id="2.40.128.20:FF:000001">
    <property type="entry name" value="Fatty acid-binding protein, adipocyte"/>
    <property type="match status" value="1"/>
</dbReference>
<dbReference type="Gene3D" id="2.40.128.20">
    <property type="match status" value="1"/>
</dbReference>
<dbReference type="InterPro" id="IPR012674">
    <property type="entry name" value="Calycin"/>
</dbReference>
<dbReference type="InterPro" id="IPR000463">
    <property type="entry name" value="Fatty_acid-bd"/>
</dbReference>
<dbReference type="InterPro" id="IPR031259">
    <property type="entry name" value="ILBP"/>
</dbReference>
<dbReference type="InterPro" id="IPR000566">
    <property type="entry name" value="Lipocln_cytosolic_FA-bd_dom"/>
</dbReference>
<dbReference type="PANTHER" id="PTHR11955">
    <property type="entry name" value="FATTY ACID BINDING PROTEIN"/>
    <property type="match status" value="1"/>
</dbReference>
<dbReference type="Pfam" id="PF00061">
    <property type="entry name" value="Lipocalin"/>
    <property type="match status" value="1"/>
</dbReference>
<dbReference type="PRINTS" id="PR00178">
    <property type="entry name" value="FATTYACIDBP"/>
</dbReference>
<dbReference type="SUPFAM" id="SSF50814">
    <property type="entry name" value="Lipocalins"/>
    <property type="match status" value="1"/>
</dbReference>
<dbReference type="PROSITE" id="PS00214">
    <property type="entry name" value="FABP"/>
    <property type="match status" value="1"/>
</dbReference>
<name>FABP5_PYGPA</name>
<sequence>MAIDAFLGKWCLISSEGFDEYMKELGVGMAMRKMGSMAKPDVYIIKDGDTITVKTESTFKTSQFSFKLGEKFEENTLDGRKTQTLVSLKDDGSLIQEQEWDGKKTIITRKLVDGQLVVECDMNGIKCVRVYQKA</sequence>
<evidence type="ECO:0000250" key="1">
    <source>
        <dbReference type="UniProtKB" id="Q01469"/>
    </source>
</evidence>
<evidence type="ECO:0000250" key="2">
    <source>
        <dbReference type="UniProtKB" id="Q05816"/>
    </source>
</evidence>
<evidence type="ECO:0000255" key="3">
    <source>
        <dbReference type="RuleBase" id="RU003696"/>
    </source>
</evidence>
<evidence type="ECO:0000269" key="4">
    <source>
    </source>
</evidence>
<evidence type="ECO:0000303" key="5">
    <source>
    </source>
</evidence>
<evidence type="ECO:0000305" key="6"/>
<evidence type="ECO:0007744" key="7">
    <source>
        <dbReference type="PDB" id="5BVT"/>
    </source>
</evidence>
<evidence type="ECO:0007829" key="8">
    <source>
        <dbReference type="PDB" id="5BVT"/>
    </source>
</evidence>
<gene>
    <name evidence="5" type="primary">FABP5</name>
</gene>
<organism>
    <name type="scientific">Pygoscelis papua</name>
    <name type="common">Gentoo penguin</name>
    <dbReference type="NCBI Taxonomy" id="30457"/>
    <lineage>
        <taxon>Eukaryota</taxon>
        <taxon>Metazoa</taxon>
        <taxon>Chordata</taxon>
        <taxon>Craniata</taxon>
        <taxon>Vertebrata</taxon>
        <taxon>Euteleostomi</taxon>
        <taxon>Archelosauria</taxon>
        <taxon>Archosauria</taxon>
        <taxon>Dinosauria</taxon>
        <taxon>Saurischia</taxon>
        <taxon>Theropoda</taxon>
        <taxon>Coelurosauria</taxon>
        <taxon>Aves</taxon>
        <taxon>Neognathae</taxon>
        <taxon>Neoaves</taxon>
        <taxon>Aequornithes</taxon>
        <taxon>Sphenisciformes</taxon>
        <taxon>Spheniscidae</taxon>
        <taxon>Pygoscelis</taxon>
    </lineage>
</organism>
<reference evidence="7" key="1">
    <citation type="journal article" date="2015" name="Biochem. Biophys. Res. Commun.">
        <title>Structural basis for the ligand-binding specificity of fatty acid-binding proteins (pFABP4 and pFABP5) in gentoo penguin.</title>
        <authorList>
            <person name="Lee C.W."/>
            <person name="Kim J.E."/>
            <person name="Do H."/>
            <person name="Kim R.O."/>
            <person name="Lee S.G."/>
            <person name="Park H.H."/>
            <person name="Chang J.H."/>
            <person name="Yim J.H."/>
            <person name="Park H."/>
            <person name="Kim I.C."/>
            <person name="Lee J.H."/>
        </authorList>
    </citation>
    <scope>NUCLEOTIDE SEQUENCE [MRNA]</scope>
    <scope>X-RAY CRYSTALLOGRAPHY (2.3 ANGSTROMS) OF APOPROTEIN AND IN COMPLEX WITH PALMITATE</scope>
    <scope>FUNCTION</scope>
    <scope>SUBSTRATE SPECIFICITY</scope>
    <scope>SUBUNIT</scope>
    <scope>DOMAIN</scope>
</reference>
<protein>
    <recommendedName>
        <fullName evidence="5">Fatty acid-binding protein 5</fullName>
    </recommendedName>
    <alternativeName>
        <fullName evidence="6">Epidermal-type fatty acid-binding protein</fullName>
        <shortName evidence="6">E-FABP</shortName>
    </alternativeName>
    <alternativeName>
        <fullName evidence="6">Fatty acid-binding protein, epidermal</fullName>
    </alternativeName>
</protein>
<proteinExistence type="evidence at protein level"/>
<comment type="function">
    <text evidence="1 2 4">Intracellular carrier for long-chain fatty acids and related active lipids, such as endocannabinoids, that regulate the metabolism and actions of the ligands they bind. In addition to the cytosolic transport, selectively delivers specific fatty acids from the cytosol to the nucleus, wherein they activate nuclear receptors (By similarity). Delivers retinoic acid to the nuclear receptor peroxisome proliferator-activated receptor delta; which promotes proliferation and survival. May also serve as a synaptic carrier of endocannabinoid at central synapses and thus controls retrograde endocannabinoid signaling. Modulates inflammation by regulating PTGES induction via NF-kappa-B activation, and prostaglandin E2 (PGE2) biosynthesis during inflammation (By similarity). Has the highest binding affinity for docosahexaenoic acid (DHA) and decreasing relative affinity for eicosapentaenoic acid (EPA), alpha-linolenic acid (ALA), oleic acid, palmitic acid, linoleic acid and stearic acid, respectively (PubMed:26206084).</text>
</comment>
<comment type="catalytic activity">
    <reaction evidence="1">
        <text>hexadecanoate(out) = hexadecanoate(in)</text>
        <dbReference type="Rhea" id="RHEA:45256"/>
        <dbReference type="ChEBI" id="CHEBI:7896"/>
    </reaction>
</comment>
<comment type="catalytic activity">
    <reaction evidence="1">
        <text>(9Z,12Z)-octadecadienoate(out) = (9Z,12Z)-octadecadienoate(in)</text>
        <dbReference type="Rhea" id="RHEA:45264"/>
        <dbReference type="ChEBI" id="CHEBI:30245"/>
    </reaction>
</comment>
<comment type="catalytic activity">
    <reaction evidence="1">
        <text>(9Z)-octadecenoate(out) = (9Z)-octadecenoate(in)</text>
        <dbReference type="Rhea" id="RHEA:33655"/>
        <dbReference type="ChEBI" id="CHEBI:30823"/>
    </reaction>
</comment>
<comment type="subunit">
    <text evidence="4">Monomer.</text>
</comment>
<comment type="subcellular location">
    <subcellularLocation>
        <location evidence="1">Cytoplasm</location>
    </subcellularLocation>
    <subcellularLocation>
        <location evidence="1">Nucleus</location>
    </subcellularLocation>
    <subcellularLocation>
        <location evidence="2">Synapse</location>
    </subcellularLocation>
    <subcellularLocation>
        <location evidence="2">Postsynaptic density</location>
    </subcellularLocation>
    <subcellularLocation>
        <location evidence="2">Secreted</location>
    </subcellularLocation>
    <text evidence="1 2">Localizes primarily to the cytoplasm. Upon certain ligand binding, a conformation change exposes a nuclear localization motif and the protein is transported into nucleus (By similarity). Secreted by astrocytes, but not by neurons (By similarity).</text>
</comment>
<comment type="domain">
    <text evidence="4">Forms a beta-barrel structure that accommodates the hydrophobic ligand in its interior.</text>
</comment>
<comment type="similarity">
    <text evidence="3">Belongs to the calycin superfamily. Fatty-acid binding protein (FABP) family.</text>
</comment>
<feature type="chain" id="PRO_0000444561" description="Fatty acid-binding protein 5">
    <location>
        <begin position="1"/>
        <end position="134"/>
    </location>
</feature>
<feature type="short sequence motif" description="Nuclear localization signal" evidence="1">
    <location>
        <begin position="23"/>
        <end position="33"/>
    </location>
</feature>
<feature type="binding site" evidence="4">
    <location>
        <position position="109"/>
    </location>
    <ligand>
        <name>hexadecanoate</name>
        <dbReference type="ChEBI" id="CHEBI:7896"/>
    </ligand>
</feature>
<feature type="binding site" evidence="1">
    <location>
        <position position="109"/>
    </location>
    <ligand>
        <name>N-eicosanoyl ethanolamine</name>
        <dbReference type="ChEBI" id="CHEBI:85253"/>
    </ligand>
</feature>
<feature type="binding site" evidence="1">
    <location>
        <begin position="129"/>
        <end position="131"/>
    </location>
    <ligand>
        <name>(9Z,12Z)-octadecadienoate</name>
        <dbReference type="ChEBI" id="CHEBI:30245"/>
    </ligand>
</feature>
<feature type="binding site" evidence="4">
    <location>
        <begin position="129"/>
        <end position="131"/>
    </location>
    <ligand>
        <name>hexadecanoate</name>
        <dbReference type="ChEBI" id="CHEBI:7896"/>
    </ligand>
</feature>
<feature type="binding site" evidence="1">
    <location>
        <position position="131"/>
    </location>
    <ligand>
        <name>N-eicosanoyl ethanolamine</name>
        <dbReference type="ChEBI" id="CHEBI:85253"/>
    </ligand>
</feature>
<feature type="helix" evidence="8">
    <location>
        <begin position="2"/>
        <end position="6"/>
    </location>
</feature>
<feature type="strand" evidence="8">
    <location>
        <begin position="8"/>
        <end position="17"/>
    </location>
</feature>
<feature type="helix" evidence="8">
    <location>
        <begin position="18"/>
        <end position="24"/>
    </location>
</feature>
<feature type="helix" evidence="8">
    <location>
        <begin position="29"/>
        <end position="37"/>
    </location>
</feature>
<feature type="strand" evidence="8">
    <location>
        <begin position="41"/>
        <end position="47"/>
    </location>
</feature>
<feature type="strand" evidence="8">
    <location>
        <begin position="50"/>
        <end position="56"/>
    </location>
</feature>
<feature type="strand" evidence="8">
    <location>
        <begin position="62"/>
        <end position="66"/>
    </location>
</feature>
<feature type="strand" evidence="8">
    <location>
        <begin position="72"/>
        <end position="75"/>
    </location>
</feature>
<feature type="strand" evidence="8">
    <location>
        <begin position="81"/>
        <end position="88"/>
    </location>
</feature>
<feature type="strand" evidence="8">
    <location>
        <begin position="94"/>
        <end position="100"/>
    </location>
</feature>
<feature type="strand" evidence="8">
    <location>
        <begin position="103"/>
        <end position="112"/>
    </location>
</feature>
<feature type="strand" evidence="8">
    <location>
        <begin position="115"/>
        <end position="122"/>
    </location>
</feature>
<feature type="strand" evidence="8">
    <location>
        <begin position="125"/>
        <end position="133"/>
    </location>
</feature>
<accession>A0A0K0MJ13</accession>